<organism>
    <name type="scientific">Homo sapiens</name>
    <name type="common">Human</name>
    <dbReference type="NCBI Taxonomy" id="9606"/>
    <lineage>
        <taxon>Eukaryota</taxon>
        <taxon>Metazoa</taxon>
        <taxon>Chordata</taxon>
        <taxon>Craniata</taxon>
        <taxon>Vertebrata</taxon>
        <taxon>Euteleostomi</taxon>
        <taxon>Mammalia</taxon>
        <taxon>Eutheria</taxon>
        <taxon>Euarchontoglires</taxon>
        <taxon>Primates</taxon>
        <taxon>Haplorrhini</taxon>
        <taxon>Catarrhini</taxon>
        <taxon>Hominidae</taxon>
        <taxon>Homo</taxon>
    </lineage>
</organism>
<feature type="chain" id="PRO_0000332147" description="Uncharacterized protein FLJ76381">
    <location>
        <begin position="1"/>
        <end position="153"/>
    </location>
</feature>
<feature type="region of interest" description="Disordered" evidence="1">
    <location>
        <begin position="19"/>
        <end position="46"/>
    </location>
</feature>
<name>YI018_HUMAN</name>
<dbReference type="EMBL" id="AF523265">
    <property type="protein sequence ID" value="AAM82158.1"/>
    <property type="molecule type" value="mRNA"/>
</dbReference>
<dbReference type="EMBL" id="AK290223">
    <property type="protein sequence ID" value="BAF82912.1"/>
    <property type="molecule type" value="mRNA"/>
</dbReference>
<dbReference type="EMBL" id="AL590399">
    <property type="status" value="NOT_ANNOTATED_CDS"/>
    <property type="molecule type" value="Genomic_DNA"/>
</dbReference>
<dbReference type="EMBL" id="BC101842">
    <property type="status" value="NOT_ANNOTATED_CDS"/>
    <property type="molecule type" value="mRNA"/>
</dbReference>
<dbReference type="EMBL" id="BC112977">
    <property type="status" value="NOT_ANNOTATED_CDS"/>
    <property type="molecule type" value="mRNA"/>
</dbReference>
<dbReference type="EMBL" id="BC112978">
    <property type="status" value="NOT_ANNOTATED_CDS"/>
    <property type="molecule type" value="mRNA"/>
</dbReference>
<dbReference type="BioMuta" id="-"/>
<dbReference type="jPOST" id="Q8NFD4"/>
<dbReference type="AGR" id="HGNC:27852"/>
<dbReference type="HPA" id="ENSG00000283886">
    <property type="expression patterns" value="Low tissue specificity"/>
</dbReference>
<dbReference type="neXtProt" id="NX_Q8NFD4"/>
<dbReference type="VEuPathDB" id="HostDB:ENSG00000283886"/>
<dbReference type="InParanoid" id="Q8NFD4"/>
<dbReference type="OMA" id="EQAPILC"/>
<dbReference type="PAN-GO" id="Q8NFD4">
    <property type="GO annotations" value="0 GO annotations based on evolutionary models"/>
</dbReference>
<dbReference type="PathwayCommons" id="Q8NFD4"/>
<dbReference type="Pharos" id="Q8NFD4">
    <property type="development level" value="Tdark"/>
</dbReference>
<dbReference type="Proteomes" id="UP000005640">
    <property type="component" value="Unplaced"/>
</dbReference>
<dbReference type="RNAct" id="Q8NFD4">
    <property type="molecule type" value="protein"/>
</dbReference>
<keyword id="KW-1185">Reference proteome</keyword>
<evidence type="ECO:0000256" key="1">
    <source>
        <dbReference type="SAM" id="MobiDB-lite"/>
    </source>
</evidence>
<proteinExistence type="evidence at transcript level"/>
<reference key="1">
    <citation type="submission" date="2002-06" db="EMBL/GenBank/DDBJ databases">
        <authorList>
            <person name="Guo J.H."/>
        </authorList>
    </citation>
    <scope>NUCLEOTIDE SEQUENCE [LARGE SCALE MRNA]</scope>
    <source>
        <tissue>Testis</tissue>
    </source>
</reference>
<reference key="2">
    <citation type="journal article" date="2004" name="Nat. Genet.">
        <title>Complete sequencing and characterization of 21,243 full-length human cDNAs.</title>
        <authorList>
            <person name="Ota T."/>
            <person name="Suzuki Y."/>
            <person name="Nishikawa T."/>
            <person name="Otsuki T."/>
            <person name="Sugiyama T."/>
            <person name="Irie R."/>
            <person name="Wakamatsu A."/>
            <person name="Hayashi K."/>
            <person name="Sato H."/>
            <person name="Nagai K."/>
            <person name="Kimura K."/>
            <person name="Makita H."/>
            <person name="Sekine M."/>
            <person name="Obayashi M."/>
            <person name="Nishi T."/>
            <person name="Shibahara T."/>
            <person name="Tanaka T."/>
            <person name="Ishii S."/>
            <person name="Yamamoto J."/>
            <person name="Saito K."/>
            <person name="Kawai Y."/>
            <person name="Isono Y."/>
            <person name="Nakamura Y."/>
            <person name="Nagahari K."/>
            <person name="Murakami K."/>
            <person name="Yasuda T."/>
            <person name="Iwayanagi T."/>
            <person name="Wagatsuma M."/>
            <person name="Shiratori A."/>
            <person name="Sudo H."/>
            <person name="Hosoiri T."/>
            <person name="Kaku Y."/>
            <person name="Kodaira H."/>
            <person name="Kondo H."/>
            <person name="Sugawara M."/>
            <person name="Takahashi M."/>
            <person name="Kanda K."/>
            <person name="Yokoi T."/>
            <person name="Furuya T."/>
            <person name="Kikkawa E."/>
            <person name="Omura Y."/>
            <person name="Abe K."/>
            <person name="Kamihara K."/>
            <person name="Katsuta N."/>
            <person name="Sato K."/>
            <person name="Tanikawa M."/>
            <person name="Yamazaki M."/>
            <person name="Ninomiya K."/>
            <person name="Ishibashi T."/>
            <person name="Yamashita H."/>
            <person name="Murakawa K."/>
            <person name="Fujimori K."/>
            <person name="Tanai H."/>
            <person name="Kimata M."/>
            <person name="Watanabe M."/>
            <person name="Hiraoka S."/>
            <person name="Chiba Y."/>
            <person name="Ishida S."/>
            <person name="Ono Y."/>
            <person name="Takiguchi S."/>
            <person name="Watanabe S."/>
            <person name="Yosida M."/>
            <person name="Hotuta T."/>
            <person name="Kusano J."/>
            <person name="Kanehori K."/>
            <person name="Takahashi-Fujii A."/>
            <person name="Hara H."/>
            <person name="Tanase T.-O."/>
            <person name="Nomura Y."/>
            <person name="Togiya S."/>
            <person name="Komai F."/>
            <person name="Hara R."/>
            <person name="Takeuchi K."/>
            <person name="Arita M."/>
            <person name="Imose N."/>
            <person name="Musashino K."/>
            <person name="Yuuki H."/>
            <person name="Oshima A."/>
            <person name="Sasaki N."/>
            <person name="Aotsuka S."/>
            <person name="Yoshikawa Y."/>
            <person name="Matsunawa H."/>
            <person name="Ichihara T."/>
            <person name="Shiohata N."/>
            <person name="Sano S."/>
            <person name="Moriya S."/>
            <person name="Momiyama H."/>
            <person name="Satoh N."/>
            <person name="Takami S."/>
            <person name="Terashima Y."/>
            <person name="Suzuki O."/>
            <person name="Nakagawa S."/>
            <person name="Senoh A."/>
            <person name="Mizoguchi H."/>
            <person name="Goto Y."/>
            <person name="Shimizu F."/>
            <person name="Wakebe H."/>
            <person name="Hishigaki H."/>
            <person name="Watanabe T."/>
            <person name="Sugiyama A."/>
            <person name="Takemoto M."/>
            <person name="Kawakami B."/>
            <person name="Yamazaki M."/>
            <person name="Watanabe K."/>
            <person name="Kumagai A."/>
            <person name="Itakura S."/>
            <person name="Fukuzumi Y."/>
            <person name="Fujimori Y."/>
            <person name="Komiyama M."/>
            <person name="Tashiro H."/>
            <person name="Tanigami A."/>
            <person name="Fujiwara T."/>
            <person name="Ono T."/>
            <person name="Yamada K."/>
            <person name="Fujii Y."/>
            <person name="Ozaki K."/>
            <person name="Hirao M."/>
            <person name="Ohmori Y."/>
            <person name="Kawabata A."/>
            <person name="Hikiji T."/>
            <person name="Kobatake N."/>
            <person name="Inagaki H."/>
            <person name="Ikema Y."/>
            <person name="Okamoto S."/>
            <person name="Okitani R."/>
            <person name="Kawakami T."/>
            <person name="Noguchi S."/>
            <person name="Itoh T."/>
            <person name="Shigeta K."/>
            <person name="Senba T."/>
            <person name="Matsumura K."/>
            <person name="Nakajima Y."/>
            <person name="Mizuno T."/>
            <person name="Morinaga M."/>
            <person name="Sasaki M."/>
            <person name="Togashi T."/>
            <person name="Oyama M."/>
            <person name="Hata H."/>
            <person name="Watanabe M."/>
            <person name="Komatsu T."/>
            <person name="Mizushima-Sugano J."/>
            <person name="Satoh T."/>
            <person name="Shirai Y."/>
            <person name="Takahashi Y."/>
            <person name="Nakagawa K."/>
            <person name="Okumura K."/>
            <person name="Nagase T."/>
            <person name="Nomura N."/>
            <person name="Kikuchi H."/>
            <person name="Masuho Y."/>
            <person name="Yamashita R."/>
            <person name="Nakai K."/>
            <person name="Yada T."/>
            <person name="Nakamura Y."/>
            <person name="Ohara O."/>
            <person name="Isogai T."/>
            <person name="Sugano S."/>
        </authorList>
    </citation>
    <scope>NUCLEOTIDE SEQUENCE [LARGE SCALE MRNA]</scope>
    <source>
        <tissue>Thalamus</tissue>
    </source>
</reference>
<reference key="3">
    <citation type="journal article" date="2004" name="Nature">
        <title>DNA sequence and analysis of human chromosome 9.</title>
        <authorList>
            <person name="Humphray S.J."/>
            <person name="Oliver K."/>
            <person name="Hunt A.R."/>
            <person name="Plumb R.W."/>
            <person name="Loveland J.E."/>
            <person name="Howe K.L."/>
            <person name="Andrews T.D."/>
            <person name="Searle S."/>
            <person name="Hunt S.E."/>
            <person name="Scott C.E."/>
            <person name="Jones M.C."/>
            <person name="Ainscough R."/>
            <person name="Almeida J.P."/>
            <person name="Ambrose K.D."/>
            <person name="Ashwell R.I.S."/>
            <person name="Babbage A.K."/>
            <person name="Babbage S."/>
            <person name="Bagguley C.L."/>
            <person name="Bailey J."/>
            <person name="Banerjee R."/>
            <person name="Barker D.J."/>
            <person name="Barlow K.F."/>
            <person name="Bates K."/>
            <person name="Beasley H."/>
            <person name="Beasley O."/>
            <person name="Bird C.P."/>
            <person name="Bray-Allen S."/>
            <person name="Brown A.J."/>
            <person name="Brown J.Y."/>
            <person name="Burford D."/>
            <person name="Burrill W."/>
            <person name="Burton J."/>
            <person name="Carder C."/>
            <person name="Carter N.P."/>
            <person name="Chapman J.C."/>
            <person name="Chen Y."/>
            <person name="Clarke G."/>
            <person name="Clark S.Y."/>
            <person name="Clee C.M."/>
            <person name="Clegg S."/>
            <person name="Collier R.E."/>
            <person name="Corby N."/>
            <person name="Crosier M."/>
            <person name="Cummings A.T."/>
            <person name="Davies J."/>
            <person name="Dhami P."/>
            <person name="Dunn M."/>
            <person name="Dutta I."/>
            <person name="Dyer L.W."/>
            <person name="Earthrowl M.E."/>
            <person name="Faulkner L."/>
            <person name="Fleming C.J."/>
            <person name="Frankish A."/>
            <person name="Frankland J.A."/>
            <person name="French L."/>
            <person name="Fricker D.G."/>
            <person name="Garner P."/>
            <person name="Garnett J."/>
            <person name="Ghori J."/>
            <person name="Gilbert J.G.R."/>
            <person name="Glison C."/>
            <person name="Grafham D.V."/>
            <person name="Gribble S."/>
            <person name="Griffiths C."/>
            <person name="Griffiths-Jones S."/>
            <person name="Grocock R."/>
            <person name="Guy J."/>
            <person name="Hall R.E."/>
            <person name="Hammond S."/>
            <person name="Harley J.L."/>
            <person name="Harrison E.S.I."/>
            <person name="Hart E.A."/>
            <person name="Heath P.D."/>
            <person name="Henderson C.D."/>
            <person name="Hopkins B.L."/>
            <person name="Howard P.J."/>
            <person name="Howden P.J."/>
            <person name="Huckle E."/>
            <person name="Johnson C."/>
            <person name="Johnson D."/>
            <person name="Joy A.A."/>
            <person name="Kay M."/>
            <person name="Keenan S."/>
            <person name="Kershaw J.K."/>
            <person name="Kimberley A.M."/>
            <person name="King A."/>
            <person name="Knights A."/>
            <person name="Laird G.K."/>
            <person name="Langford C."/>
            <person name="Lawlor S."/>
            <person name="Leongamornlert D.A."/>
            <person name="Leversha M."/>
            <person name="Lloyd C."/>
            <person name="Lloyd D.M."/>
            <person name="Lovell J."/>
            <person name="Martin S."/>
            <person name="Mashreghi-Mohammadi M."/>
            <person name="Matthews L."/>
            <person name="McLaren S."/>
            <person name="McLay K.E."/>
            <person name="McMurray A."/>
            <person name="Milne S."/>
            <person name="Nickerson T."/>
            <person name="Nisbett J."/>
            <person name="Nordsiek G."/>
            <person name="Pearce A.V."/>
            <person name="Peck A.I."/>
            <person name="Porter K.M."/>
            <person name="Pandian R."/>
            <person name="Pelan S."/>
            <person name="Phillimore B."/>
            <person name="Povey S."/>
            <person name="Ramsey Y."/>
            <person name="Rand V."/>
            <person name="Scharfe M."/>
            <person name="Sehra H.K."/>
            <person name="Shownkeen R."/>
            <person name="Sims S.K."/>
            <person name="Skuce C.D."/>
            <person name="Smith M."/>
            <person name="Steward C.A."/>
            <person name="Swarbreck D."/>
            <person name="Sycamore N."/>
            <person name="Tester J."/>
            <person name="Thorpe A."/>
            <person name="Tracey A."/>
            <person name="Tromans A."/>
            <person name="Thomas D.W."/>
            <person name="Wall M."/>
            <person name="Wallis J.M."/>
            <person name="West A.P."/>
            <person name="Whitehead S.L."/>
            <person name="Willey D.L."/>
            <person name="Williams S.A."/>
            <person name="Wilming L."/>
            <person name="Wray P.W."/>
            <person name="Young L."/>
            <person name="Ashurst J.L."/>
            <person name="Coulson A."/>
            <person name="Blocker H."/>
            <person name="Durbin R.M."/>
            <person name="Sulston J.E."/>
            <person name="Hubbard T."/>
            <person name="Jackson M.J."/>
            <person name="Bentley D.R."/>
            <person name="Beck S."/>
            <person name="Rogers J."/>
            <person name="Dunham I."/>
        </authorList>
    </citation>
    <scope>NUCLEOTIDE SEQUENCE [LARGE SCALE GENOMIC DNA]</scope>
</reference>
<reference key="4">
    <citation type="journal article" date="2004" name="Genome Res.">
        <title>The status, quality, and expansion of the NIH full-length cDNA project: the Mammalian Gene Collection (MGC).</title>
        <authorList>
            <consortium name="The MGC Project Team"/>
        </authorList>
    </citation>
    <scope>NUCLEOTIDE SEQUENCE [LARGE SCALE MRNA]</scope>
    <source>
        <tissue>Brain</tissue>
    </source>
</reference>
<protein>
    <recommendedName>
        <fullName>Uncharacterized protein FLJ76381</fullName>
    </recommendedName>
</protein>
<sequence>MGGFGSRFWQEGVWDRDLEKSTRLEEDAMESEPLAGTKTRGRGRRRWEARHGWTLPAHASQPSPRTVVATATGAEVSACAGRSAGTRVARPESQLSHLYGWDKYSNPRPSRRARAVARVHALEQAPILCRALRWGLTQFLRGTSPVTQSVPFS</sequence>
<accession>Q8NFD4</accession>